<accession>Q6EW33</accession>
<comment type="function">
    <text evidence="1">May help in the organization of the PsaE and PsaF subunits.</text>
</comment>
<comment type="subcellular location">
    <subcellularLocation>
        <location evidence="1">Plastid</location>
        <location evidence="1">Chloroplast thylakoid membrane</location>
        <topology evidence="1">Single-pass membrane protein</topology>
    </subcellularLocation>
</comment>
<comment type="similarity">
    <text evidence="1">Belongs to the PsaJ family.</text>
</comment>
<feature type="chain" id="PRO_0000207799" description="Photosystem I reaction center subunit IX">
    <location>
        <begin position="1"/>
        <end position="44"/>
    </location>
</feature>
<feature type="transmembrane region" description="Helical" evidence="1">
    <location>
        <begin position="7"/>
        <end position="27"/>
    </location>
</feature>
<reference key="1">
    <citation type="journal article" date="2004" name="Mol. Biol. Evol.">
        <title>The chloroplast genome of Nymphaea alba: whole-genome analyses and the problem of identifying the most basal angiosperm.</title>
        <authorList>
            <person name="Goremykin V.V."/>
            <person name="Hirsch-Ernst K.I."/>
            <person name="Woelfl S."/>
            <person name="Hellwig F.H."/>
        </authorList>
    </citation>
    <scope>NUCLEOTIDE SEQUENCE [LARGE SCALE GENOMIC DNA]</scope>
</reference>
<name>PSAJ_NYMAL</name>
<evidence type="ECO:0000255" key="1">
    <source>
        <dbReference type="HAMAP-Rule" id="MF_00522"/>
    </source>
</evidence>
<proteinExistence type="inferred from homology"/>
<dbReference type="EMBL" id="AJ627251">
    <property type="protein sequence ID" value="CAF28613.1"/>
    <property type="molecule type" value="Genomic_DNA"/>
</dbReference>
<dbReference type="RefSeq" id="YP_053175.1">
    <property type="nucleotide sequence ID" value="NC_006050.1"/>
</dbReference>
<dbReference type="SMR" id="Q6EW33"/>
<dbReference type="GeneID" id="2896239"/>
<dbReference type="GO" id="GO:0009535">
    <property type="term" value="C:chloroplast thylakoid membrane"/>
    <property type="evidence" value="ECO:0007669"/>
    <property type="project" value="UniProtKB-SubCell"/>
</dbReference>
<dbReference type="GO" id="GO:0009522">
    <property type="term" value="C:photosystem I"/>
    <property type="evidence" value="ECO:0007669"/>
    <property type="project" value="UniProtKB-KW"/>
</dbReference>
<dbReference type="GO" id="GO:0015979">
    <property type="term" value="P:photosynthesis"/>
    <property type="evidence" value="ECO:0007669"/>
    <property type="project" value="UniProtKB-UniRule"/>
</dbReference>
<dbReference type="FunFam" id="1.20.5.510:FF:000001">
    <property type="entry name" value="Photosystem I reaction center subunit IX"/>
    <property type="match status" value="1"/>
</dbReference>
<dbReference type="Gene3D" id="1.20.5.510">
    <property type="entry name" value="Single helix bin"/>
    <property type="match status" value="1"/>
</dbReference>
<dbReference type="HAMAP" id="MF_00522">
    <property type="entry name" value="PSI_PsaJ"/>
    <property type="match status" value="1"/>
</dbReference>
<dbReference type="InterPro" id="IPR002615">
    <property type="entry name" value="PSI_PsaJ"/>
</dbReference>
<dbReference type="InterPro" id="IPR036062">
    <property type="entry name" value="PSI_PsaJ_sf"/>
</dbReference>
<dbReference type="PANTHER" id="PTHR36082">
    <property type="match status" value="1"/>
</dbReference>
<dbReference type="PANTHER" id="PTHR36082:SF2">
    <property type="entry name" value="PHOTOSYSTEM I REACTION CENTER SUBUNIT IX"/>
    <property type="match status" value="1"/>
</dbReference>
<dbReference type="Pfam" id="PF01701">
    <property type="entry name" value="PSI_PsaJ"/>
    <property type="match status" value="1"/>
</dbReference>
<dbReference type="SUPFAM" id="SSF81544">
    <property type="entry name" value="Subunit IX of photosystem I reaction centre, PsaJ"/>
    <property type="match status" value="1"/>
</dbReference>
<gene>
    <name evidence="1" type="primary">psaJ</name>
</gene>
<keyword id="KW-0150">Chloroplast</keyword>
<keyword id="KW-0472">Membrane</keyword>
<keyword id="KW-0602">Photosynthesis</keyword>
<keyword id="KW-0603">Photosystem I</keyword>
<keyword id="KW-0934">Plastid</keyword>
<keyword id="KW-0793">Thylakoid</keyword>
<keyword id="KW-0812">Transmembrane</keyword>
<keyword id="KW-1133">Transmembrane helix</keyword>
<protein>
    <recommendedName>
        <fullName evidence="1">Photosystem I reaction center subunit IX</fullName>
    </recommendedName>
    <alternativeName>
        <fullName evidence="1">PSI-J</fullName>
    </alternativeName>
</protein>
<geneLocation type="chloroplast"/>
<sequence length="44" mass="5023">MRDIKTYLSVAPVLTTLWFGSLAGLLIEINRLFPDALTFPFFSF</sequence>
<organism>
    <name type="scientific">Nymphaea alba</name>
    <name type="common">White water-lily</name>
    <name type="synonym">Castalia alba</name>
    <dbReference type="NCBI Taxonomy" id="34301"/>
    <lineage>
        <taxon>Eukaryota</taxon>
        <taxon>Viridiplantae</taxon>
        <taxon>Streptophyta</taxon>
        <taxon>Embryophyta</taxon>
        <taxon>Tracheophyta</taxon>
        <taxon>Spermatophyta</taxon>
        <taxon>Magnoliopsida</taxon>
        <taxon>Nymphaeales</taxon>
        <taxon>Nymphaeaceae</taxon>
        <taxon>Nymphaea</taxon>
    </lineage>
</organism>